<name>HPNE_SINFN</name>
<comment type="function">
    <text evidence="1">Involved in the biosynthesis of the hopanoid precursor squalene (SQ) from farnesyl diphosphate (FPP). Catalyzes the third (last) step, the reduction of hydroxysqualene (HSQ) to SQ.</text>
</comment>
<comment type="catalytic activity">
    <reaction evidence="1">
        <text>squalene + FAD + H2O + H(+) = hydroxysqualene + FADH2</text>
        <dbReference type="Rhea" id="RHEA:49088"/>
        <dbReference type="ChEBI" id="CHEBI:15377"/>
        <dbReference type="ChEBI" id="CHEBI:15378"/>
        <dbReference type="ChEBI" id="CHEBI:15440"/>
        <dbReference type="ChEBI" id="CHEBI:57692"/>
        <dbReference type="ChEBI" id="CHEBI:58307"/>
        <dbReference type="ChEBI" id="CHEBI:88123"/>
        <dbReference type="EC" id="1.17.8.1"/>
    </reaction>
</comment>
<comment type="pathway">
    <text evidence="1">Secondary metabolite biosynthesis; hopanoid biosynthesis.</text>
</comment>
<comment type="similarity">
    <text evidence="2">Belongs to the HpnE family.</text>
</comment>
<keyword id="KW-0274">FAD</keyword>
<keyword id="KW-0285">Flavoprotein</keyword>
<keyword id="KW-0560">Oxidoreductase</keyword>
<keyword id="KW-0614">Plasmid</keyword>
<keyword id="KW-1185">Reference proteome</keyword>
<sequence>MPKNVHIIGAGISGLSAAVQLSNAGLPVHVYEATQQAGGRCRSFFDSATNLTIDNGNHLVLSGNQYVRNYARAIGTESGLVGPTSAKFPFVDISTVQRWQVDLGGGRLPTWVFHKARRVPDTRLWDYLKLAPILWAGADELVGNTIPCNGTLYRRLVRPLLLAALNCDPPEGSAGLAGAIVRETLLAGGEACRPLVARDGLSAVLVEPAVKLLERRGATVRLSHKLRKLAKSAEIISELDFGDDKIAVGPDDAVILAVPPRAAATLLPGLKTPTEFRAVVNAHFRFDPPVGADPILGVVGGLVEWLFAYPQRLSVTISNGDRLLDIPREEVVRVIWRDVCEAGGISGELPPWQIVCERRATFQATPEQNALRPGPVTGCKNLFLAGDWTATGLPATIEGSVRSGNRAADLALSETNT</sequence>
<organism>
    <name type="scientific">Sinorhizobium fredii (strain NBRC 101917 / NGR234)</name>
    <dbReference type="NCBI Taxonomy" id="394"/>
    <lineage>
        <taxon>Bacteria</taxon>
        <taxon>Pseudomonadati</taxon>
        <taxon>Pseudomonadota</taxon>
        <taxon>Alphaproteobacteria</taxon>
        <taxon>Hyphomicrobiales</taxon>
        <taxon>Rhizobiaceae</taxon>
        <taxon>Sinorhizobium/Ensifer group</taxon>
        <taxon>Sinorhizobium</taxon>
    </lineage>
</organism>
<geneLocation type="plasmid">
    <name>sym pNGR234a</name>
</geneLocation>
<protein>
    <recommendedName>
        <fullName evidence="1">Hydroxysqualene dehydroxylase</fullName>
        <shortName evidence="1">SQase</shortName>
        <ecNumber evidence="1">1.17.8.1</ecNumber>
    </recommendedName>
</protein>
<accession>P55349</accession>
<proteinExistence type="inferred from homology"/>
<gene>
    <name type="ordered locus">NGR_a00450</name>
    <name type="ORF">y4aB</name>
</gene>
<dbReference type="EC" id="1.17.8.1" evidence="1"/>
<dbReference type="EMBL" id="U00090">
    <property type="protein sequence ID" value="AAB91600.1"/>
    <property type="molecule type" value="Genomic_DNA"/>
</dbReference>
<dbReference type="RefSeq" id="NP_443762.1">
    <property type="nucleotide sequence ID" value="NC_000914.2"/>
</dbReference>
<dbReference type="RefSeq" id="WP_010875087.1">
    <property type="nucleotide sequence ID" value="NC_000914.2"/>
</dbReference>
<dbReference type="SMR" id="P55349"/>
<dbReference type="KEGG" id="rhi:NGR_a00450"/>
<dbReference type="PATRIC" id="fig|394.7.peg.42"/>
<dbReference type="eggNOG" id="COG1233">
    <property type="taxonomic scope" value="Bacteria"/>
</dbReference>
<dbReference type="HOGENOM" id="CLU_022687_2_1_5"/>
<dbReference type="OrthoDB" id="7849608at2"/>
<dbReference type="UniPathway" id="UPA00337"/>
<dbReference type="Proteomes" id="UP000001054">
    <property type="component" value="Plasmid pNGR234a"/>
</dbReference>
<dbReference type="GO" id="GO:0016491">
    <property type="term" value="F:oxidoreductase activity"/>
    <property type="evidence" value="ECO:0007669"/>
    <property type="project" value="UniProtKB-KW"/>
</dbReference>
<dbReference type="Gene3D" id="3.50.50.60">
    <property type="entry name" value="FAD/NAD(P)-binding domain"/>
    <property type="match status" value="1"/>
</dbReference>
<dbReference type="InterPro" id="IPR002937">
    <property type="entry name" value="Amino_oxidase"/>
</dbReference>
<dbReference type="InterPro" id="IPR036188">
    <property type="entry name" value="FAD/NAD-bd_sf"/>
</dbReference>
<dbReference type="InterPro" id="IPR017830">
    <property type="entry name" value="SQase_HpnE"/>
</dbReference>
<dbReference type="InterPro" id="IPR050464">
    <property type="entry name" value="Zeta_carotene_desat/Oxidored"/>
</dbReference>
<dbReference type="NCBIfam" id="TIGR03467">
    <property type="entry name" value="HpnE"/>
    <property type="match status" value="1"/>
</dbReference>
<dbReference type="PANTHER" id="PTHR42923:SF47">
    <property type="entry name" value="BLR3003 PROTEIN"/>
    <property type="match status" value="1"/>
</dbReference>
<dbReference type="PANTHER" id="PTHR42923">
    <property type="entry name" value="PROTOPORPHYRINOGEN OXIDASE"/>
    <property type="match status" value="1"/>
</dbReference>
<dbReference type="Pfam" id="PF01593">
    <property type="entry name" value="Amino_oxidase"/>
    <property type="match status" value="1"/>
</dbReference>
<dbReference type="PRINTS" id="PR00420">
    <property type="entry name" value="RNGMNOXGNASE"/>
</dbReference>
<dbReference type="SUPFAM" id="SSF51905">
    <property type="entry name" value="FAD/NAD(P)-binding domain"/>
    <property type="match status" value="1"/>
</dbReference>
<evidence type="ECO:0000250" key="1">
    <source>
        <dbReference type="UniProtKB" id="Q6N3F3"/>
    </source>
</evidence>
<evidence type="ECO:0000305" key="2"/>
<feature type="chain" id="PRO_0000200797" description="Hydroxysqualene dehydroxylase">
    <location>
        <begin position="1"/>
        <end position="417"/>
    </location>
</feature>
<reference key="1">
    <citation type="journal article" date="1997" name="Nature">
        <title>Molecular basis of symbiosis between Rhizobium and legumes.</title>
        <authorList>
            <person name="Freiberg C.A."/>
            <person name="Fellay R."/>
            <person name="Bairoch A."/>
            <person name="Broughton W.J."/>
            <person name="Rosenthal A."/>
            <person name="Perret X."/>
        </authorList>
    </citation>
    <scope>NUCLEOTIDE SEQUENCE [LARGE SCALE GENOMIC DNA]</scope>
    <source>
        <strain>NBRC 101917 / NGR234</strain>
    </source>
</reference>
<reference key="2">
    <citation type="journal article" date="2009" name="Appl. Environ. Microbiol.">
        <title>Rhizobium sp. strain NGR234 possesses a remarkable number of secretion systems.</title>
        <authorList>
            <person name="Schmeisser C."/>
            <person name="Liesegang H."/>
            <person name="Krysciak D."/>
            <person name="Bakkou N."/>
            <person name="Le Quere A."/>
            <person name="Wollherr A."/>
            <person name="Heinemeyer I."/>
            <person name="Morgenstern B."/>
            <person name="Pommerening-Roeser A."/>
            <person name="Flores M."/>
            <person name="Palacios R."/>
            <person name="Brenner S."/>
            <person name="Gottschalk G."/>
            <person name="Schmitz R.A."/>
            <person name="Broughton W.J."/>
            <person name="Perret X."/>
            <person name="Strittmatter A.W."/>
            <person name="Streit W.R."/>
        </authorList>
    </citation>
    <scope>NUCLEOTIDE SEQUENCE [LARGE SCALE GENOMIC DNA]</scope>
    <source>
        <strain>NBRC 101917 / NGR234</strain>
    </source>
</reference>